<accession>P73940</accession>
<keyword id="KW-0378">Hydrolase</keyword>
<keyword id="KW-0645">Protease</keyword>
<keyword id="KW-1185">Reference proteome</keyword>
<keyword id="KW-0732">Signal</keyword>
<dbReference type="EMBL" id="BA000022">
    <property type="protein sequence ID" value="BAA18006.1"/>
    <property type="molecule type" value="Genomic_DNA"/>
</dbReference>
<dbReference type="PIR" id="S75445">
    <property type="entry name" value="S75445"/>
</dbReference>
<dbReference type="SMR" id="P73940"/>
<dbReference type="FunCoup" id="P73940">
    <property type="interactions" value="440"/>
</dbReference>
<dbReference type="IntAct" id="P73940">
    <property type="interactions" value="15"/>
</dbReference>
<dbReference type="STRING" id="1148.gene:10498876"/>
<dbReference type="MEROPS" id="S01.482"/>
<dbReference type="PaxDb" id="1148-1653090"/>
<dbReference type="EnsemblBacteria" id="BAA18006">
    <property type="protein sequence ID" value="BAA18006"/>
    <property type="gene ID" value="BAA18006"/>
</dbReference>
<dbReference type="KEGG" id="syn:sll1427"/>
<dbReference type="eggNOG" id="COG0265">
    <property type="taxonomic scope" value="Bacteria"/>
</dbReference>
<dbReference type="InParanoid" id="P73940"/>
<dbReference type="PhylomeDB" id="P73940"/>
<dbReference type="BRENDA" id="3.4.21.107">
    <property type="organism ID" value="6192"/>
</dbReference>
<dbReference type="Proteomes" id="UP000001425">
    <property type="component" value="Chromosome"/>
</dbReference>
<dbReference type="GO" id="GO:0004252">
    <property type="term" value="F:serine-type endopeptidase activity"/>
    <property type="evidence" value="ECO:0007669"/>
    <property type="project" value="InterPro"/>
</dbReference>
<dbReference type="GO" id="GO:0006508">
    <property type="term" value="P:proteolysis"/>
    <property type="evidence" value="ECO:0007669"/>
    <property type="project" value="UniProtKB-KW"/>
</dbReference>
<dbReference type="CDD" id="cd10838">
    <property type="entry name" value="cpPDZ_HhoA-like"/>
    <property type="match status" value="1"/>
</dbReference>
<dbReference type="Gene3D" id="2.30.42.10">
    <property type="match status" value="1"/>
</dbReference>
<dbReference type="Gene3D" id="2.40.10.120">
    <property type="match status" value="1"/>
</dbReference>
<dbReference type="InterPro" id="IPR048172">
    <property type="entry name" value="HhoA_HhoB_HtrA-like"/>
</dbReference>
<dbReference type="InterPro" id="IPR001478">
    <property type="entry name" value="PDZ"/>
</dbReference>
<dbReference type="InterPro" id="IPR036034">
    <property type="entry name" value="PDZ_sf"/>
</dbReference>
<dbReference type="InterPro" id="IPR009003">
    <property type="entry name" value="Peptidase_S1_PA"/>
</dbReference>
<dbReference type="InterPro" id="IPR001940">
    <property type="entry name" value="Peptidase_S1C"/>
</dbReference>
<dbReference type="NCBIfam" id="NF041521">
    <property type="entry name" value="HhoA_HhoB_HtrA"/>
    <property type="match status" value="1"/>
</dbReference>
<dbReference type="PANTHER" id="PTHR22939">
    <property type="entry name" value="SERINE PROTEASE FAMILY S1C HTRA-RELATED"/>
    <property type="match status" value="1"/>
</dbReference>
<dbReference type="PANTHER" id="PTHR22939:SF129">
    <property type="entry name" value="SERINE PROTEASE HTRA2, MITOCHONDRIAL"/>
    <property type="match status" value="1"/>
</dbReference>
<dbReference type="Pfam" id="PF13180">
    <property type="entry name" value="PDZ_2"/>
    <property type="match status" value="1"/>
</dbReference>
<dbReference type="Pfam" id="PF13365">
    <property type="entry name" value="Trypsin_2"/>
    <property type="match status" value="1"/>
</dbReference>
<dbReference type="PRINTS" id="PR00834">
    <property type="entry name" value="PROTEASES2C"/>
</dbReference>
<dbReference type="SMART" id="SM00228">
    <property type="entry name" value="PDZ"/>
    <property type="match status" value="1"/>
</dbReference>
<dbReference type="SUPFAM" id="SSF50156">
    <property type="entry name" value="PDZ domain-like"/>
    <property type="match status" value="1"/>
</dbReference>
<dbReference type="SUPFAM" id="SSF50494">
    <property type="entry name" value="Trypsin-like serine proteases"/>
    <property type="match status" value="1"/>
</dbReference>
<dbReference type="PROSITE" id="PS50106">
    <property type="entry name" value="PDZ"/>
    <property type="match status" value="1"/>
</dbReference>
<organism>
    <name type="scientific">Synechocystis sp. (strain ATCC 27184 / PCC 6803 / Kazusa)</name>
    <dbReference type="NCBI Taxonomy" id="1111708"/>
    <lineage>
        <taxon>Bacteria</taxon>
        <taxon>Bacillati</taxon>
        <taxon>Cyanobacteriota</taxon>
        <taxon>Cyanophyceae</taxon>
        <taxon>Synechococcales</taxon>
        <taxon>Merismopediaceae</taxon>
        <taxon>Synechocystis</taxon>
    </lineage>
</organism>
<proteinExistence type="evidence at protein level"/>
<name>HHOB_SYNY3</name>
<reference key="1">
    <citation type="journal article" date="1996" name="DNA Res.">
        <title>Sequence analysis of the genome of the unicellular cyanobacterium Synechocystis sp. strain PCC6803. II. Sequence determination of the entire genome and assignment of potential protein-coding regions.</title>
        <authorList>
            <person name="Kaneko T."/>
            <person name="Sato S."/>
            <person name="Kotani H."/>
            <person name="Tanaka A."/>
            <person name="Asamizu E."/>
            <person name="Nakamura Y."/>
            <person name="Miyajima N."/>
            <person name="Hirosawa M."/>
            <person name="Sugiura M."/>
            <person name="Sasamoto S."/>
            <person name="Kimura T."/>
            <person name="Hosouchi T."/>
            <person name="Matsuno A."/>
            <person name="Muraki A."/>
            <person name="Nakazaki N."/>
            <person name="Naruo K."/>
            <person name="Okumura S."/>
            <person name="Shimpo S."/>
            <person name="Takeuchi C."/>
            <person name="Wada T."/>
            <person name="Watanabe A."/>
            <person name="Yamada M."/>
            <person name="Yasuda M."/>
            <person name="Tabata S."/>
        </authorList>
    </citation>
    <scope>NUCLEOTIDE SEQUENCE [LARGE SCALE GENOMIC DNA]</scope>
    <source>
        <strain>ATCC 27184 / PCC 6803 / Kazusa</strain>
    </source>
</reference>
<reference key="2">
    <citation type="journal article" date="2006" name="J. Biol. Chem.">
        <title>The deg proteases protect Synechocystis sp. PCC 6803 during heat and light stresses but are not essential for removal of damaged D1 protein during the photosystem two repair cycle.</title>
        <authorList>
            <person name="Barker M."/>
            <person name="de Vries R."/>
            <person name="Nield J."/>
            <person name="Komenda J."/>
            <person name="Nixon P.J."/>
        </authorList>
    </citation>
    <scope>FUNCTION IN PHOTOPROTECTION</scope>
    <scope>PROTECTION AGAINST HEAT STRESS</scope>
    <scope>DISRUPTION PHENOTYPE</scope>
</reference>
<reference key="3">
    <citation type="journal article" date="2007" name="Biochim. Biophys. Acta">
        <title>The role of the FtsH and Deg proteases in the repair of UV-B radiation-damaged Photosystem II in the cyanobacterium Synechocystis PCC 6803.</title>
        <authorList>
            <person name="Cheregi O."/>
            <person name="Sicora C."/>
            <person name="Kos P.B."/>
            <person name="Barker M."/>
            <person name="Nixon P.J."/>
            <person name="Vass I."/>
        </authorList>
    </citation>
    <scope>INDUCTION</scope>
    <scope>DISRUPTION PHENOTYPE</scope>
</reference>
<feature type="signal peptide" evidence="1">
    <location>
        <begin position="1"/>
        <end position="25"/>
    </location>
</feature>
<feature type="chain" id="PRO_0000400423" description="Putative serine protease HhoB">
    <location>
        <begin position="26"/>
        <end position="416"/>
    </location>
</feature>
<feature type="domain" description="PDZ" evidence="2">
    <location>
        <begin position="320"/>
        <end position="398"/>
    </location>
</feature>
<feature type="region of interest" description="Disordered" evidence="3">
    <location>
        <begin position="35"/>
        <end position="57"/>
    </location>
</feature>
<feature type="compositionally biased region" description="Polar residues" evidence="3">
    <location>
        <begin position="35"/>
        <end position="53"/>
    </location>
</feature>
<comment type="function">
    <text evidence="4">A putative protease, its function overlaps that of the related putative proteases HtrA and HhoA.</text>
</comment>
<comment type="induction">
    <text evidence="5">No induction by UV-B light.</text>
</comment>
<comment type="disruption phenotype">
    <text evidence="4 5">No effect in a single knockout, but growth is inhibited at high light (120 umol photons/m(2)/s) or at elevated temperature in a triple protease knockout mutant (hhoA, hhoB and htrA). Triple mutants are not phototactic. No effect on the PSII repair cycle, even in the triple protease knockout strain.</text>
</comment>
<comment type="similarity">
    <text evidence="6">Belongs to the peptidase S1C family.</text>
</comment>
<evidence type="ECO:0000255" key="1"/>
<evidence type="ECO:0000255" key="2">
    <source>
        <dbReference type="PROSITE-ProRule" id="PRU00143"/>
    </source>
</evidence>
<evidence type="ECO:0000256" key="3">
    <source>
        <dbReference type="SAM" id="MobiDB-lite"/>
    </source>
</evidence>
<evidence type="ECO:0000269" key="4">
    <source>
    </source>
</evidence>
<evidence type="ECO:0000269" key="5">
    <source>
    </source>
</evidence>
<evidence type="ECO:0000305" key="6"/>
<gene>
    <name type="primary">hhoB</name>
    <name type="ordered locus">sll1427</name>
</gene>
<sequence length="416" mass="43196">MAIHLKASHLGVAVLLLLFGGAIGAAGGGYLLSSGQNHSSPDSPVNTSPQSLTPAPVESNYRSALPLTLPRSAQDDQELNFIARAVQKIGPAVVRIDSERTAVSQGGPMGDQPFFRRFFGEEMPPNPDPREQGTGSGFILSSDGEVLTNAHVVEGASTVKVTLKDGSVLEGKVMGIDTMTDVAVVKVEAENLPVVEIGQSDRLQPGEWAIAIGNPLGLDNTVTVGIISALGRSSSEVGVPDKRVRFIQTDAAINPGNSGGPLLNAKGEVIGVNTAIRADAQGLGFAIPIQTAQNVAENLFTKGKMEHPYLGIHMVTLTPEMTKQLRTSGELPAGVTADTGVLIIQVSPGSPAAQAGLAPGDIILEVGGMGVKTATDVQERVEVSQIGEPLAIAVKRGQKPQMMAVRPGPFPEDLGQ</sequence>
<protein>
    <recommendedName>
        <fullName>Putative serine protease HhoB</fullName>
    </recommendedName>
</protein>